<feature type="chain" id="PRO_0000166129" description="D-amino acid dehydrogenase">
    <location>
        <begin position="1"/>
        <end position="416"/>
    </location>
</feature>
<feature type="binding site" evidence="1">
    <location>
        <begin position="3"/>
        <end position="17"/>
    </location>
    <ligand>
        <name>FAD</name>
        <dbReference type="ChEBI" id="CHEBI:57692"/>
    </ligand>
</feature>
<proteinExistence type="inferred from homology"/>
<organism>
    <name type="scientific">Brucella suis biovar 1 (strain 1330)</name>
    <dbReference type="NCBI Taxonomy" id="204722"/>
    <lineage>
        <taxon>Bacteria</taxon>
        <taxon>Pseudomonadati</taxon>
        <taxon>Pseudomonadota</taxon>
        <taxon>Alphaproteobacteria</taxon>
        <taxon>Hyphomicrobiales</taxon>
        <taxon>Brucellaceae</taxon>
        <taxon>Brucella/Ochrobactrum group</taxon>
        <taxon>Brucella</taxon>
    </lineage>
</organism>
<sequence length="416" mass="45094">MQITILGSGVIGVTTAYYLAKLGHEVTVIDREEGPAPETSFANAGQVSPGYASPWAAPGIPLKAAKWLFQKHAPLILRLTTDPVQYRWLLQMLANCTDSRYKINKTRMVRVAEYSRDCLIELRKDTGIEYDQRSQGTLQLFREQYQLDGIGKDIEVLRQDGVPFEVLDRDGCVNVEPALAHAKDKFVGGLRLPNDETGDCFKFTNALAKIAEGLGVKFRFGVNIKSLLMSGGKISGVETSEGIVTAERYVVALGSYTPALIKALGLNAPIYPVKGYSITAPIVDESRAPVSTVLDESYKIAITRLGDRIRVGGMAEVSGFTDDLPAARRATLDLSVTDLFPGGDLKAATFWSGLRPMTPDSTPIIGGTRYDNLFINAGHGTLGWTMACGSGRLLADLISGNKADIRADDLGIARYN</sequence>
<protein>
    <recommendedName>
        <fullName evidence="1">D-amino acid dehydrogenase</fullName>
        <ecNumber evidence="1">1.4.99.-</ecNumber>
    </recommendedName>
</protein>
<accession>Q8FVC0</accession>
<accession>G0KDT4</accession>
<name>DADA_BRUSU</name>
<comment type="function">
    <text evidence="1">Oxidative deamination of D-amino acids.</text>
</comment>
<comment type="catalytic activity">
    <reaction evidence="1">
        <text>a D-alpha-amino acid + A + H2O = a 2-oxocarboxylate + AH2 + NH4(+)</text>
        <dbReference type="Rhea" id="RHEA:18125"/>
        <dbReference type="ChEBI" id="CHEBI:13193"/>
        <dbReference type="ChEBI" id="CHEBI:15377"/>
        <dbReference type="ChEBI" id="CHEBI:17499"/>
        <dbReference type="ChEBI" id="CHEBI:28938"/>
        <dbReference type="ChEBI" id="CHEBI:35179"/>
        <dbReference type="ChEBI" id="CHEBI:59871"/>
    </reaction>
</comment>
<comment type="cofactor">
    <cofactor evidence="1">
        <name>FAD</name>
        <dbReference type="ChEBI" id="CHEBI:57692"/>
    </cofactor>
</comment>
<comment type="similarity">
    <text evidence="1">Belongs to the DadA oxidoreductase family.</text>
</comment>
<keyword id="KW-0274">FAD</keyword>
<keyword id="KW-0285">Flavoprotein</keyword>
<keyword id="KW-0560">Oxidoreductase</keyword>
<dbReference type="EC" id="1.4.99.-" evidence="1"/>
<dbReference type="EMBL" id="AE014292">
    <property type="protein sequence ID" value="AAN34096.1"/>
    <property type="molecule type" value="Genomic_DNA"/>
</dbReference>
<dbReference type="EMBL" id="CP002998">
    <property type="protein sequence ID" value="AEM20372.1"/>
    <property type="molecule type" value="Genomic_DNA"/>
</dbReference>
<dbReference type="RefSeq" id="WP_004690359.1">
    <property type="nucleotide sequence ID" value="NZ_KN046805.1"/>
</dbReference>
<dbReference type="SMR" id="Q8FVC0"/>
<dbReference type="GeneID" id="45053921"/>
<dbReference type="KEGG" id="bms:BRA0924"/>
<dbReference type="KEGG" id="bsi:BS1330_II0916"/>
<dbReference type="PATRIC" id="fig|204722.21.peg.375"/>
<dbReference type="HOGENOM" id="CLU_007884_9_2_5"/>
<dbReference type="PhylomeDB" id="Q8FVC0"/>
<dbReference type="Proteomes" id="UP000007104">
    <property type="component" value="Chromosome II"/>
</dbReference>
<dbReference type="GO" id="GO:0005737">
    <property type="term" value="C:cytoplasm"/>
    <property type="evidence" value="ECO:0007669"/>
    <property type="project" value="TreeGrafter"/>
</dbReference>
<dbReference type="GO" id="GO:0005886">
    <property type="term" value="C:plasma membrane"/>
    <property type="evidence" value="ECO:0007669"/>
    <property type="project" value="TreeGrafter"/>
</dbReference>
<dbReference type="GO" id="GO:0008718">
    <property type="term" value="F:D-amino-acid dehydrogenase activity"/>
    <property type="evidence" value="ECO:0007669"/>
    <property type="project" value="UniProtKB-UniRule"/>
</dbReference>
<dbReference type="GO" id="GO:0055130">
    <property type="term" value="P:D-alanine catabolic process"/>
    <property type="evidence" value="ECO:0007669"/>
    <property type="project" value="TreeGrafter"/>
</dbReference>
<dbReference type="FunFam" id="3.50.50.60:FF:000020">
    <property type="entry name" value="D-amino acid dehydrogenase"/>
    <property type="match status" value="1"/>
</dbReference>
<dbReference type="Gene3D" id="3.30.9.10">
    <property type="entry name" value="D-Amino Acid Oxidase, subunit A, domain 2"/>
    <property type="match status" value="1"/>
</dbReference>
<dbReference type="Gene3D" id="3.50.50.60">
    <property type="entry name" value="FAD/NAD(P)-binding domain"/>
    <property type="match status" value="2"/>
</dbReference>
<dbReference type="HAMAP" id="MF_01202">
    <property type="entry name" value="DadA"/>
    <property type="match status" value="1"/>
</dbReference>
<dbReference type="InterPro" id="IPR023080">
    <property type="entry name" value="DadA"/>
</dbReference>
<dbReference type="InterPro" id="IPR006076">
    <property type="entry name" value="FAD-dep_OxRdtase"/>
</dbReference>
<dbReference type="InterPro" id="IPR036188">
    <property type="entry name" value="FAD/NAD-bd_sf"/>
</dbReference>
<dbReference type="NCBIfam" id="NF001933">
    <property type="entry name" value="PRK00711.1"/>
    <property type="match status" value="1"/>
</dbReference>
<dbReference type="PANTHER" id="PTHR13847:SF280">
    <property type="entry name" value="D-AMINO ACID DEHYDROGENASE"/>
    <property type="match status" value="1"/>
</dbReference>
<dbReference type="PANTHER" id="PTHR13847">
    <property type="entry name" value="SARCOSINE DEHYDROGENASE-RELATED"/>
    <property type="match status" value="1"/>
</dbReference>
<dbReference type="Pfam" id="PF01266">
    <property type="entry name" value="DAO"/>
    <property type="match status" value="1"/>
</dbReference>
<dbReference type="SUPFAM" id="SSF54373">
    <property type="entry name" value="FAD-linked reductases, C-terminal domain"/>
    <property type="match status" value="1"/>
</dbReference>
<dbReference type="SUPFAM" id="SSF51905">
    <property type="entry name" value="FAD/NAD(P)-binding domain"/>
    <property type="match status" value="1"/>
</dbReference>
<reference key="1">
    <citation type="journal article" date="2002" name="Proc. Natl. Acad. Sci. U.S.A.">
        <title>The Brucella suis genome reveals fundamental similarities between animal and plant pathogens and symbionts.</title>
        <authorList>
            <person name="Paulsen I.T."/>
            <person name="Seshadri R."/>
            <person name="Nelson K.E."/>
            <person name="Eisen J.A."/>
            <person name="Heidelberg J.F."/>
            <person name="Read T.D."/>
            <person name="Dodson R.J."/>
            <person name="Umayam L.A."/>
            <person name="Brinkac L.M."/>
            <person name="Beanan M.J."/>
            <person name="Daugherty S.C."/>
            <person name="DeBoy R.T."/>
            <person name="Durkin A.S."/>
            <person name="Kolonay J.F."/>
            <person name="Madupu R."/>
            <person name="Nelson W.C."/>
            <person name="Ayodeji B."/>
            <person name="Kraul M."/>
            <person name="Shetty J."/>
            <person name="Malek J.A."/>
            <person name="Van Aken S.E."/>
            <person name="Riedmuller S."/>
            <person name="Tettelin H."/>
            <person name="Gill S.R."/>
            <person name="White O."/>
            <person name="Salzberg S.L."/>
            <person name="Hoover D.L."/>
            <person name="Lindler L.E."/>
            <person name="Halling S.M."/>
            <person name="Boyle S.M."/>
            <person name="Fraser C.M."/>
        </authorList>
    </citation>
    <scope>NUCLEOTIDE SEQUENCE [LARGE SCALE GENOMIC DNA]</scope>
    <source>
        <strain>1330</strain>
    </source>
</reference>
<reference key="2">
    <citation type="journal article" date="2011" name="J. Bacteriol.">
        <title>Revised genome sequence of Brucella suis 1330.</title>
        <authorList>
            <person name="Tae H."/>
            <person name="Shallom S."/>
            <person name="Settlage R."/>
            <person name="Preston D."/>
            <person name="Adams L.G."/>
            <person name="Garner H.R."/>
        </authorList>
    </citation>
    <scope>NUCLEOTIDE SEQUENCE [LARGE SCALE GENOMIC DNA]</scope>
    <source>
        <strain>1330</strain>
    </source>
</reference>
<gene>
    <name evidence="1" type="primary">dadA</name>
    <name type="ordered locus">BRA0924</name>
    <name type="ordered locus">BS1330_II0916</name>
</gene>
<evidence type="ECO:0000255" key="1">
    <source>
        <dbReference type="HAMAP-Rule" id="MF_01202"/>
    </source>
</evidence>